<proteinExistence type="predicted"/>
<accession>P03290</accession>
<protein>
    <recommendedName>
        <fullName>Uncharacterized protein E-115</fullName>
    </recommendedName>
</protein>
<feature type="chain" id="PRO_0000221918" description="Uncharacterized protein E-115">
    <location>
        <begin position="1"/>
        <end position="115"/>
    </location>
</feature>
<feature type="region of interest" description="Disordered" evidence="1">
    <location>
        <begin position="1"/>
        <end position="115"/>
    </location>
</feature>
<feature type="compositionally biased region" description="Polar residues" evidence="1">
    <location>
        <begin position="7"/>
        <end position="17"/>
    </location>
</feature>
<feature type="compositionally biased region" description="Low complexity" evidence="1">
    <location>
        <begin position="60"/>
        <end position="70"/>
    </location>
</feature>
<feature type="compositionally biased region" description="Low complexity" evidence="1">
    <location>
        <begin position="91"/>
        <end position="107"/>
    </location>
</feature>
<organism>
    <name type="scientific">Human adenovirus C serotype 2</name>
    <name type="common">HAdV-2</name>
    <name type="synonym">Human adenovirus 2</name>
    <dbReference type="NCBI Taxonomy" id="10515"/>
    <lineage>
        <taxon>Viruses</taxon>
        <taxon>Varidnaviria</taxon>
        <taxon>Bamfordvirae</taxon>
        <taxon>Preplasmiviricota</taxon>
        <taxon>Tectiliviricetes</taxon>
        <taxon>Rowavirales</taxon>
        <taxon>Adenoviridae</taxon>
        <taxon>Mastadenovirus</taxon>
        <taxon>Human mastadenovirus C</taxon>
    </lineage>
</organism>
<organismHost>
    <name type="scientific">Homo sapiens</name>
    <name type="common">Human</name>
    <dbReference type="NCBI Taxonomy" id="9606"/>
</organismHost>
<keyword id="KW-1185">Reference proteome</keyword>
<evidence type="ECO:0000256" key="1">
    <source>
        <dbReference type="SAM" id="MobiDB-lite"/>
    </source>
</evidence>
<name>Y115_ADE02</name>
<reference key="1">
    <citation type="journal article" date="1982" name="J. Biol. Chem.">
        <title>Nucleotide sequences from the adenovirus-2 genome.</title>
        <authorList>
            <person name="Gingeras T.R."/>
            <person name="Sciaky D."/>
            <person name="Gelinas R.E."/>
            <person name="Bing-Dong J."/>
            <person name="Yen C.E."/>
            <person name="Kelly M.M."/>
            <person name="Bullock P.A."/>
            <person name="Parsons B.L."/>
            <person name="O'Neill K.E."/>
            <person name="Roberts R.J."/>
        </authorList>
    </citation>
    <scope>NUCLEOTIDE SEQUENCE [GENOMIC DNA]</scope>
</reference>
<dbReference type="EMBL" id="J01917">
    <property type="status" value="NOT_ANNOTATED_CDS"/>
    <property type="molecule type" value="Genomic_DNA"/>
</dbReference>
<dbReference type="PIR" id="A03862">
    <property type="entry name" value="A03862"/>
</dbReference>
<dbReference type="Proteomes" id="UP000008167">
    <property type="component" value="Segment"/>
</dbReference>
<sequence>MGETWFLTPNGQSSPGSWNARPSAGPAARMPTPRNRYFSRPSSTPLKVCTAPRAAPPPRASCAPRATPRRGWTMTPWSNATWPTRRAKTGSASAPAGPASSAPWPARSPERTPSP</sequence>